<dbReference type="EMBL" id="AK149782">
    <property type="protein sequence ID" value="BAE29080.1"/>
    <property type="status" value="ALT_INIT"/>
    <property type="molecule type" value="mRNA"/>
</dbReference>
<dbReference type="EMBL" id="AK170532">
    <property type="protein sequence ID" value="BAE41862.1"/>
    <property type="status" value="ALT_INIT"/>
    <property type="molecule type" value="mRNA"/>
</dbReference>
<dbReference type="CCDS" id="CCDS27715.2"/>
<dbReference type="RefSeq" id="NP_001028445.2">
    <property type="nucleotide sequence ID" value="NM_001033273.3"/>
</dbReference>
<dbReference type="BioGRID" id="230186">
    <property type="interactions" value="1"/>
</dbReference>
<dbReference type="FunCoup" id="Q3UE31">
    <property type="interactions" value="42"/>
</dbReference>
<dbReference type="STRING" id="10090.ENSMUSP00000128699"/>
<dbReference type="GlyGen" id="Q3UE31">
    <property type="glycosylation" value="2 sites, 1 N-linked glycan (1 site)"/>
</dbReference>
<dbReference type="iPTMnet" id="Q3UE31"/>
<dbReference type="PhosphoSitePlus" id="Q3UE31"/>
<dbReference type="jPOST" id="Q3UE31"/>
<dbReference type="PaxDb" id="10090-ENSMUSP00000128699"/>
<dbReference type="PeptideAtlas" id="Q3UE31"/>
<dbReference type="Pumba" id="Q3UE31"/>
<dbReference type="Antibodypedia" id="27826">
    <property type="antibodies" value="68 antibodies from 14 providers"/>
</dbReference>
<dbReference type="Ensembl" id="ENSMUST00000047144.13">
    <property type="protein sequence ID" value="ENSMUSP00000037011.7"/>
    <property type="gene ID" value="ENSMUSG00000036046.15"/>
</dbReference>
<dbReference type="GeneID" id="223739"/>
<dbReference type="KEGG" id="mmu:223739"/>
<dbReference type="AGR" id="MGI:2444899"/>
<dbReference type="MGI" id="MGI:2444899">
    <property type="gene designation" value="5031439G07Rik"/>
</dbReference>
<dbReference type="VEuPathDB" id="HostDB:ENSMUSG00000036046"/>
<dbReference type="eggNOG" id="KOG2465">
    <property type="taxonomic scope" value="Eukaryota"/>
</dbReference>
<dbReference type="GeneTree" id="ENSGT00390000004190"/>
<dbReference type="HOGENOM" id="CLU_010018_1_0_1"/>
<dbReference type="InParanoid" id="Q3UE31"/>
<dbReference type="OMA" id="SAATHCH"/>
<dbReference type="OrthoDB" id="1906921at2759"/>
<dbReference type="BioGRID-ORCS" id="223739">
    <property type="hits" value="1 hit in 62 CRISPR screens"/>
</dbReference>
<dbReference type="CD-CODE" id="CE726F99">
    <property type="entry name" value="Postsynaptic density"/>
</dbReference>
<dbReference type="PRO" id="PR:Q3UE31"/>
<dbReference type="Proteomes" id="UP000000589">
    <property type="component" value="Chromosome 15"/>
</dbReference>
<dbReference type="RNAct" id="Q3UE31">
    <property type="molecule type" value="protein"/>
</dbReference>
<dbReference type="Bgee" id="ENSMUSG00000036046">
    <property type="expression patterns" value="Expressed in vestibular membrane of cochlear duct and 247 other cell types or tissues"/>
</dbReference>
<dbReference type="ExpressionAtlas" id="Q3UE31">
    <property type="expression patterns" value="baseline and differential"/>
</dbReference>
<dbReference type="InterPro" id="IPR019141">
    <property type="entry name" value="DUF2045"/>
</dbReference>
<dbReference type="PANTHER" id="PTHR21477:SF13">
    <property type="entry name" value="KIAA0930"/>
    <property type="match status" value="1"/>
</dbReference>
<dbReference type="PANTHER" id="PTHR21477">
    <property type="entry name" value="ZGC:172139"/>
    <property type="match status" value="1"/>
</dbReference>
<dbReference type="Pfam" id="PF09741">
    <property type="entry name" value="DUF2045"/>
    <property type="match status" value="1"/>
</dbReference>
<name>K0930_MOUSE</name>
<protein>
    <recommendedName>
        <fullName>Uncharacterized protein KIAA0930 homolog</fullName>
    </recommendedName>
</protein>
<reference key="1">
    <citation type="journal article" date="2005" name="Science">
        <title>The transcriptional landscape of the mammalian genome.</title>
        <authorList>
            <person name="Carninci P."/>
            <person name="Kasukawa T."/>
            <person name="Katayama S."/>
            <person name="Gough J."/>
            <person name="Frith M.C."/>
            <person name="Maeda N."/>
            <person name="Oyama R."/>
            <person name="Ravasi T."/>
            <person name="Lenhard B."/>
            <person name="Wells C."/>
            <person name="Kodzius R."/>
            <person name="Shimokawa K."/>
            <person name="Bajic V.B."/>
            <person name="Brenner S.E."/>
            <person name="Batalov S."/>
            <person name="Forrest A.R."/>
            <person name="Zavolan M."/>
            <person name="Davis M.J."/>
            <person name="Wilming L.G."/>
            <person name="Aidinis V."/>
            <person name="Allen J.E."/>
            <person name="Ambesi-Impiombato A."/>
            <person name="Apweiler R."/>
            <person name="Aturaliya R.N."/>
            <person name="Bailey T.L."/>
            <person name="Bansal M."/>
            <person name="Baxter L."/>
            <person name="Beisel K.W."/>
            <person name="Bersano T."/>
            <person name="Bono H."/>
            <person name="Chalk A.M."/>
            <person name="Chiu K.P."/>
            <person name="Choudhary V."/>
            <person name="Christoffels A."/>
            <person name="Clutterbuck D.R."/>
            <person name="Crowe M.L."/>
            <person name="Dalla E."/>
            <person name="Dalrymple B.P."/>
            <person name="de Bono B."/>
            <person name="Della Gatta G."/>
            <person name="di Bernardo D."/>
            <person name="Down T."/>
            <person name="Engstrom P."/>
            <person name="Fagiolini M."/>
            <person name="Faulkner G."/>
            <person name="Fletcher C.F."/>
            <person name="Fukushima T."/>
            <person name="Furuno M."/>
            <person name="Futaki S."/>
            <person name="Gariboldi M."/>
            <person name="Georgii-Hemming P."/>
            <person name="Gingeras T.R."/>
            <person name="Gojobori T."/>
            <person name="Green R.E."/>
            <person name="Gustincich S."/>
            <person name="Harbers M."/>
            <person name="Hayashi Y."/>
            <person name="Hensch T.K."/>
            <person name="Hirokawa N."/>
            <person name="Hill D."/>
            <person name="Huminiecki L."/>
            <person name="Iacono M."/>
            <person name="Ikeo K."/>
            <person name="Iwama A."/>
            <person name="Ishikawa T."/>
            <person name="Jakt M."/>
            <person name="Kanapin A."/>
            <person name="Katoh M."/>
            <person name="Kawasawa Y."/>
            <person name="Kelso J."/>
            <person name="Kitamura H."/>
            <person name="Kitano H."/>
            <person name="Kollias G."/>
            <person name="Krishnan S.P."/>
            <person name="Kruger A."/>
            <person name="Kummerfeld S.K."/>
            <person name="Kurochkin I.V."/>
            <person name="Lareau L.F."/>
            <person name="Lazarevic D."/>
            <person name="Lipovich L."/>
            <person name="Liu J."/>
            <person name="Liuni S."/>
            <person name="McWilliam S."/>
            <person name="Madan Babu M."/>
            <person name="Madera M."/>
            <person name="Marchionni L."/>
            <person name="Matsuda H."/>
            <person name="Matsuzawa S."/>
            <person name="Miki H."/>
            <person name="Mignone F."/>
            <person name="Miyake S."/>
            <person name="Morris K."/>
            <person name="Mottagui-Tabar S."/>
            <person name="Mulder N."/>
            <person name="Nakano N."/>
            <person name="Nakauchi H."/>
            <person name="Ng P."/>
            <person name="Nilsson R."/>
            <person name="Nishiguchi S."/>
            <person name="Nishikawa S."/>
            <person name="Nori F."/>
            <person name="Ohara O."/>
            <person name="Okazaki Y."/>
            <person name="Orlando V."/>
            <person name="Pang K.C."/>
            <person name="Pavan W.J."/>
            <person name="Pavesi G."/>
            <person name="Pesole G."/>
            <person name="Petrovsky N."/>
            <person name="Piazza S."/>
            <person name="Reed J."/>
            <person name="Reid J.F."/>
            <person name="Ring B.Z."/>
            <person name="Ringwald M."/>
            <person name="Rost B."/>
            <person name="Ruan Y."/>
            <person name="Salzberg S.L."/>
            <person name="Sandelin A."/>
            <person name="Schneider C."/>
            <person name="Schoenbach C."/>
            <person name="Sekiguchi K."/>
            <person name="Semple C.A."/>
            <person name="Seno S."/>
            <person name="Sessa L."/>
            <person name="Sheng Y."/>
            <person name="Shibata Y."/>
            <person name="Shimada H."/>
            <person name="Shimada K."/>
            <person name="Silva D."/>
            <person name="Sinclair B."/>
            <person name="Sperling S."/>
            <person name="Stupka E."/>
            <person name="Sugiura K."/>
            <person name="Sultana R."/>
            <person name="Takenaka Y."/>
            <person name="Taki K."/>
            <person name="Tammoja K."/>
            <person name="Tan S.L."/>
            <person name="Tang S."/>
            <person name="Taylor M.S."/>
            <person name="Tegner J."/>
            <person name="Teichmann S.A."/>
            <person name="Ueda H.R."/>
            <person name="van Nimwegen E."/>
            <person name="Verardo R."/>
            <person name="Wei C.L."/>
            <person name="Yagi K."/>
            <person name="Yamanishi H."/>
            <person name="Zabarovsky E."/>
            <person name="Zhu S."/>
            <person name="Zimmer A."/>
            <person name="Hide W."/>
            <person name="Bult C."/>
            <person name="Grimmond S.M."/>
            <person name="Teasdale R.D."/>
            <person name="Liu E.T."/>
            <person name="Brusic V."/>
            <person name="Quackenbush J."/>
            <person name="Wahlestedt C."/>
            <person name="Mattick J.S."/>
            <person name="Hume D.A."/>
            <person name="Kai C."/>
            <person name="Sasaki D."/>
            <person name="Tomaru Y."/>
            <person name="Fukuda S."/>
            <person name="Kanamori-Katayama M."/>
            <person name="Suzuki M."/>
            <person name="Aoki J."/>
            <person name="Arakawa T."/>
            <person name="Iida J."/>
            <person name="Imamura K."/>
            <person name="Itoh M."/>
            <person name="Kato T."/>
            <person name="Kawaji H."/>
            <person name="Kawagashira N."/>
            <person name="Kawashima T."/>
            <person name="Kojima M."/>
            <person name="Kondo S."/>
            <person name="Konno H."/>
            <person name="Nakano K."/>
            <person name="Ninomiya N."/>
            <person name="Nishio T."/>
            <person name="Okada M."/>
            <person name="Plessy C."/>
            <person name="Shibata K."/>
            <person name="Shiraki T."/>
            <person name="Suzuki S."/>
            <person name="Tagami M."/>
            <person name="Waki K."/>
            <person name="Watahiki A."/>
            <person name="Okamura-Oho Y."/>
            <person name="Suzuki H."/>
            <person name="Kawai J."/>
            <person name="Hayashizaki Y."/>
        </authorList>
    </citation>
    <scope>NUCLEOTIDE SEQUENCE [LARGE SCALE MRNA]</scope>
    <source>
        <strain>C57BL/6J</strain>
        <strain>NOD</strain>
        <tissue>Bone marrow</tissue>
    </source>
</reference>
<reference key="2">
    <citation type="journal article" date="2009" name="Immunity">
        <title>The phagosomal proteome in interferon-gamma-activated macrophages.</title>
        <authorList>
            <person name="Trost M."/>
            <person name="English L."/>
            <person name="Lemieux S."/>
            <person name="Courcelles M."/>
            <person name="Desjardins M."/>
            <person name="Thibault P."/>
        </authorList>
    </citation>
    <scope>IDENTIFICATION BY MASS SPECTROMETRY [LARGE SCALE ANALYSIS]</scope>
</reference>
<reference key="3">
    <citation type="journal article" date="2010" name="Cell">
        <title>A tissue-specific atlas of mouse protein phosphorylation and expression.</title>
        <authorList>
            <person name="Huttlin E.L."/>
            <person name="Jedrychowski M.P."/>
            <person name="Elias J.E."/>
            <person name="Goswami T."/>
            <person name="Rad R."/>
            <person name="Beausoleil S.A."/>
            <person name="Villen J."/>
            <person name="Haas W."/>
            <person name="Sowa M.E."/>
            <person name="Gygi S.P."/>
        </authorList>
    </citation>
    <scope>PHOSPHORYLATION [LARGE SCALE ANALYSIS] AT SER-276; SER-279; THR-290; THR-293 AND SER-324</scope>
    <scope>IDENTIFICATION BY MASS SPECTROMETRY [LARGE SCALE ANALYSIS]</scope>
    <source>
        <tissue>Brain</tissue>
        <tissue>Kidney</tissue>
        <tissue>Spleen</tissue>
        <tissue>Testis</tissue>
    </source>
</reference>
<proteinExistence type="evidence at protein level"/>
<feature type="chain" id="PRO_0000255939" description="Uncharacterized protein KIAA0930 homolog">
    <location>
        <begin position="1"/>
        <end position="404"/>
    </location>
</feature>
<feature type="region of interest" description="Disordered" evidence="3">
    <location>
        <begin position="262"/>
        <end position="307"/>
    </location>
</feature>
<feature type="region of interest" description="Disordered" evidence="3">
    <location>
        <begin position="319"/>
        <end position="340"/>
    </location>
</feature>
<feature type="compositionally biased region" description="Polar residues" evidence="3">
    <location>
        <begin position="262"/>
        <end position="278"/>
    </location>
</feature>
<feature type="compositionally biased region" description="Basic and acidic residues" evidence="3">
    <location>
        <begin position="319"/>
        <end position="336"/>
    </location>
</feature>
<feature type="modified residue" description="Phosphoserine" evidence="2">
    <location>
        <position position="268"/>
    </location>
</feature>
<feature type="modified residue" description="Phosphoserine" evidence="5">
    <location>
        <position position="276"/>
    </location>
</feature>
<feature type="modified residue" description="Phosphoserine" evidence="5">
    <location>
        <position position="279"/>
    </location>
</feature>
<feature type="modified residue" description="Phosphothreonine" evidence="5">
    <location>
        <position position="290"/>
    </location>
</feature>
<feature type="modified residue" description="Phosphothreonine" evidence="5">
    <location>
        <position position="293"/>
    </location>
</feature>
<feature type="modified residue" description="Phosphoserine" evidence="2">
    <location>
        <position position="304"/>
    </location>
</feature>
<feature type="modified residue" description="Phosphoserine" evidence="2">
    <location>
        <position position="306"/>
    </location>
</feature>
<feature type="modified residue" description="Phosphoserine" evidence="5">
    <location>
        <position position="324"/>
    </location>
</feature>
<feature type="modified residue" description="Phosphoserine" evidence="1">
    <location>
        <position position="358"/>
    </location>
</feature>
<feature type="modified residue" description="Phosphoserine" evidence="2">
    <location>
        <position position="362"/>
    </location>
</feature>
<feature type="sequence conflict" description="In Ref. 1; BAE41862." evidence="4" ref="1">
    <original>K</original>
    <variation>E</variation>
    <location>
        <position position="153"/>
    </location>
</feature>
<keyword id="KW-0597">Phosphoprotein</keyword>
<keyword id="KW-1185">Reference proteome</keyword>
<sequence length="404" mass="45960">MLRAIAEERGRLSLRREVCGLGCFKDDRIVFWTWMFSTYFMEKLAPRQDDMLFYVRRKRAYPGNEGTIDGRKAEAEPEVEVEVYRRDSKKLPGLGDPDIDWEESVCLNLILQKLDYMVTCAVCTRADGGDIHIHRKKSQQVFASPSKHPMDSKGEESKMSYPNIFFMIDSFEEVFSDMTVGEGEMVCVELVASDKTNTFQGVIFQGSIRYEALKKVYDNRVSVAARMAQKMSFGFYKYNNMEFVRMKGPQGKGHAEMAVSRVSTGDTSPCGTEDSSPASPMHERVTSFSTPPTPERNNRPAFFSPSLKRKVPRNRIAEMKKSHSANDSEEFFREDDSGADLHNATNLRSRSLSGTGRSLVGSWLKLNRADGNFLLYAHLTYVTLPLHRILTDILEVRQKPILMT</sequence>
<accession>Q3UE31</accession>
<accession>Q3TCU3</accession>
<evidence type="ECO:0000250" key="1">
    <source>
        <dbReference type="UniProtKB" id="Q4G008"/>
    </source>
</evidence>
<evidence type="ECO:0000250" key="2">
    <source>
        <dbReference type="UniProtKB" id="Q6ICG6"/>
    </source>
</evidence>
<evidence type="ECO:0000256" key="3">
    <source>
        <dbReference type="SAM" id="MobiDB-lite"/>
    </source>
</evidence>
<evidence type="ECO:0000305" key="4"/>
<evidence type="ECO:0007744" key="5">
    <source>
    </source>
</evidence>
<organism>
    <name type="scientific">Mus musculus</name>
    <name type="common">Mouse</name>
    <dbReference type="NCBI Taxonomy" id="10090"/>
    <lineage>
        <taxon>Eukaryota</taxon>
        <taxon>Metazoa</taxon>
        <taxon>Chordata</taxon>
        <taxon>Craniata</taxon>
        <taxon>Vertebrata</taxon>
        <taxon>Euteleostomi</taxon>
        <taxon>Mammalia</taxon>
        <taxon>Eutheria</taxon>
        <taxon>Euarchontoglires</taxon>
        <taxon>Glires</taxon>
        <taxon>Rodentia</taxon>
        <taxon>Myomorpha</taxon>
        <taxon>Muroidea</taxon>
        <taxon>Muridae</taxon>
        <taxon>Murinae</taxon>
        <taxon>Mus</taxon>
        <taxon>Mus</taxon>
    </lineage>
</organism>
<comment type="sequence caution" evidence="4">
    <conflict type="erroneous initiation">
        <sequence resource="EMBL-CDS" id="BAE29080"/>
    </conflict>
    <text>Extended N-terminus.</text>
</comment>
<comment type="sequence caution" evidence="4">
    <conflict type="erroneous initiation">
        <sequence resource="EMBL-CDS" id="BAE41862"/>
    </conflict>
    <text>Extended N-terminus.</text>
</comment>